<comment type="function">
    <text evidence="2">Promotes, when overexpressed, the influx of extracellular Ca(2+), leading to membrane permeability and host cell necrosis.</text>
</comment>
<comment type="subcellular location">
    <subcellularLocation>
        <location evidence="4">Host membrane</location>
        <topology evidence="4">Multi-pass membrane protein</topology>
    </subcellularLocation>
</comment>
<comment type="similarity">
    <text evidence="3">Belongs to the orthopoxvirus OPG166 protein family.</text>
</comment>
<protein>
    <recommendedName>
        <fullName>Protein OPG166</fullName>
    </recommendedName>
</protein>
<evidence type="ECO:0000255" key="1"/>
<evidence type="ECO:0000269" key="2">
    <source>
    </source>
</evidence>
<evidence type="ECO:0000305" key="3"/>
<evidence type="ECO:0000305" key="4">
    <source>
    </source>
</evidence>
<name>PG166_VACCW</name>
<gene>
    <name type="primary">OPG166</name>
    <name type="ordered locus">VACWR162</name>
    <name type="ORF">A38L</name>
</gene>
<dbReference type="EMBL" id="D11079">
    <property type="protein sequence ID" value="BAA01810.1"/>
    <property type="molecule type" value="Genomic_DNA"/>
</dbReference>
<dbReference type="EMBL" id="M61187">
    <property type="protein sequence ID" value="AAA48334.1"/>
    <property type="molecule type" value="Genomic_DNA"/>
</dbReference>
<dbReference type="EMBL" id="X57318">
    <property type="protein sequence ID" value="CAA40588.1"/>
    <property type="molecule type" value="Genomic_DNA"/>
</dbReference>
<dbReference type="EMBL" id="AY243312">
    <property type="protein sequence ID" value="AAO89441.1"/>
    <property type="molecule type" value="Genomic_DNA"/>
</dbReference>
<dbReference type="PIR" id="S29922">
    <property type="entry name" value="S29922"/>
</dbReference>
<dbReference type="SMR" id="P24763"/>
<dbReference type="KEGG" id="vg:3707692"/>
<dbReference type="Proteomes" id="UP000000344">
    <property type="component" value="Genome"/>
</dbReference>
<dbReference type="GO" id="GO:0070062">
    <property type="term" value="C:extracellular exosome"/>
    <property type="evidence" value="ECO:0007669"/>
    <property type="project" value="TreeGrafter"/>
</dbReference>
<dbReference type="GO" id="GO:0033644">
    <property type="term" value="C:host cell membrane"/>
    <property type="evidence" value="ECO:0007669"/>
    <property type="project" value="UniProtKB-SubCell"/>
</dbReference>
<dbReference type="GO" id="GO:0005886">
    <property type="term" value="C:plasma membrane"/>
    <property type="evidence" value="ECO:0007669"/>
    <property type="project" value="InterPro"/>
</dbReference>
<dbReference type="GO" id="GO:0070053">
    <property type="term" value="F:thrombospondin receptor activity"/>
    <property type="evidence" value="ECO:0007669"/>
    <property type="project" value="InterPro"/>
</dbReference>
<dbReference type="GO" id="GO:0022409">
    <property type="term" value="P:positive regulation of cell-cell adhesion"/>
    <property type="evidence" value="ECO:0007669"/>
    <property type="project" value="InterPro"/>
</dbReference>
<dbReference type="GO" id="GO:0050729">
    <property type="term" value="P:positive regulation of inflammatory response"/>
    <property type="evidence" value="ECO:0007669"/>
    <property type="project" value="InterPro"/>
</dbReference>
<dbReference type="GO" id="GO:0050766">
    <property type="term" value="P:positive regulation of phagocytosis"/>
    <property type="evidence" value="ECO:0007669"/>
    <property type="project" value="InterPro"/>
</dbReference>
<dbReference type="Gene3D" id="2.60.40.10">
    <property type="entry name" value="Immunoglobulins"/>
    <property type="match status" value="1"/>
</dbReference>
<dbReference type="InterPro" id="IPR006704">
    <property type="entry name" value="CD47"/>
</dbReference>
<dbReference type="InterPro" id="IPR013147">
    <property type="entry name" value="CD47-like_TM"/>
</dbReference>
<dbReference type="InterPro" id="IPR013270">
    <property type="entry name" value="CD47_Vset"/>
</dbReference>
<dbReference type="InterPro" id="IPR013783">
    <property type="entry name" value="Ig-like_fold"/>
</dbReference>
<dbReference type="PANTHER" id="PTHR10613">
    <property type="entry name" value="LEUKOCYTE SURFACE ANTIGEN CD47"/>
    <property type="match status" value="1"/>
</dbReference>
<dbReference type="PANTHER" id="PTHR10613:SF0">
    <property type="entry name" value="LEUKOCYTE SURFACE ANTIGEN CD47"/>
    <property type="match status" value="1"/>
</dbReference>
<dbReference type="Pfam" id="PF04549">
    <property type="entry name" value="CD47"/>
    <property type="match status" value="1"/>
</dbReference>
<dbReference type="Pfam" id="PF08204">
    <property type="entry name" value="V-set_CD47"/>
    <property type="match status" value="1"/>
</dbReference>
<organismHost>
    <name type="scientific">Bos taurus</name>
    <name type="common">Bovine</name>
    <dbReference type="NCBI Taxonomy" id="9913"/>
</organismHost>
<keyword id="KW-0325">Glycoprotein</keyword>
<keyword id="KW-1043">Host membrane</keyword>
<keyword id="KW-0472">Membrane</keyword>
<keyword id="KW-1185">Reference proteome</keyword>
<keyword id="KW-0812">Transmembrane</keyword>
<keyword id="KW-1133">Transmembrane helix</keyword>
<proteinExistence type="inferred from homology"/>
<organism>
    <name type="scientific">Vaccinia virus (strain Western Reserve)</name>
    <name type="common">VACV</name>
    <name type="synonym">Vaccinia virus (strain WR)</name>
    <dbReference type="NCBI Taxonomy" id="10254"/>
    <lineage>
        <taxon>Viruses</taxon>
        <taxon>Varidnaviria</taxon>
        <taxon>Bamfordvirae</taxon>
        <taxon>Nucleocytoviricota</taxon>
        <taxon>Pokkesviricetes</taxon>
        <taxon>Chitovirales</taxon>
        <taxon>Poxviridae</taxon>
        <taxon>Chordopoxvirinae</taxon>
        <taxon>Orthopoxvirus</taxon>
        <taxon>Vaccinia virus</taxon>
    </lineage>
</organism>
<feature type="chain" id="PRO_0000099325" description="Protein OPG166">
    <location>
        <begin position="1"/>
        <end position="277"/>
    </location>
</feature>
<feature type="transmembrane region" description="Helical" evidence="1">
    <location>
        <begin position="124"/>
        <end position="144"/>
    </location>
</feature>
<feature type="transmembrane region" description="Helical" evidence="1">
    <location>
        <begin position="156"/>
        <end position="176"/>
    </location>
</feature>
<feature type="transmembrane region" description="Helical" evidence="1">
    <location>
        <begin position="186"/>
        <end position="206"/>
    </location>
</feature>
<feature type="transmembrane region" description="Helical" evidence="1">
    <location>
        <begin position="219"/>
        <end position="239"/>
    </location>
</feature>
<feature type="transmembrane region" description="Helical" evidence="1">
    <location>
        <begin position="247"/>
        <end position="267"/>
    </location>
</feature>
<feature type="glycosylation site" description="N-linked (GlcNAc...) asparagine; by host" evidence="1">
    <location>
        <position position="29"/>
    </location>
</feature>
<feature type="glycosylation site" description="N-linked (GlcNAc...) asparagine; by host" evidence="1">
    <location>
        <position position="58"/>
    </location>
</feature>
<feature type="sequence conflict" description="In Ref. 3; AAO89441." evidence="3" ref="3">
    <original>R</original>
    <variation>L</variation>
    <location>
        <position position="114"/>
    </location>
</feature>
<sequence>MSRVRISLIYLCTFMIITSTKTIEYTACNNTIIIPCTIDNPTKYIRWKLDNHDILTYNKTSKTTILSKWHTSARLHSLSDSDVSLIIEYKDILPGTYTCEDNTGIKSTVKLVQRHTNWFNDYQTMLMFIFTGITLFLLFLEITYTSISVVFSTNLGILQVFGCVIAMIELCGAFLFYPSMFTLRHIIGLLMMTLPSIFLIITKVFSFWLLCKLSCAVHLIIYYQLAGYILTVLGLGLSLKECVDGTLLLSGLGTIMVSEHFSLLFLVCFPSTQRDYY</sequence>
<accession>P24763</accession>
<accession>Q80HU2</accession>
<reference key="1">
    <citation type="journal article" date="1991" name="J. Gen. Virol.">
        <title>Nucleotide sequence of 42 kbp of vaccinia virus strain WR from near the right inverted terminal repeat.</title>
        <authorList>
            <person name="Smith G.L."/>
            <person name="Chan Y.S."/>
            <person name="Howard S.T."/>
        </authorList>
    </citation>
    <scope>NUCLEOTIDE SEQUENCE [GENOMIC DNA]</scope>
</reference>
<reference key="2">
    <citation type="journal article" date="1991" name="J. Biol. Chem.">
        <title>Identification, sequence, and expression of the gene encoding a Mr 35,000 subunit of the vaccinia virus DNA-dependent RNA polymerase.</title>
        <authorList>
            <person name="Amegadzie B.Y."/>
            <person name="Ahn B.-Y."/>
            <person name="Moss B."/>
        </authorList>
    </citation>
    <scope>NUCLEOTIDE SEQUENCE [GENOMIC DNA]</scope>
</reference>
<reference key="3">
    <citation type="submission" date="2003-02" db="EMBL/GenBank/DDBJ databases">
        <title>Sequencing of the coding region of Vaccinia-WR to an average 9-fold redundancy and an error rate of 0.16/10kb.</title>
        <authorList>
            <person name="Esposito J.J."/>
            <person name="Frace A.M."/>
            <person name="Sammons S.A."/>
            <person name="Olsen-Rasmussen M."/>
            <person name="Osborne J."/>
            <person name="Wohlhueter R."/>
        </authorList>
    </citation>
    <scope>NUCLEOTIDE SEQUENCE [LARGE SCALE GENOMIC DNA]</scope>
</reference>
<reference key="4">
    <citation type="journal article" date="1995" name="Virology">
        <title>The vaccinia virus A38L gene product is a 33-kDa integral membrane glycoprotein.</title>
        <authorList>
            <person name="Parkinson J.E."/>
            <person name="Sanderson C.M."/>
            <person name="Smith G.L."/>
        </authorList>
    </citation>
    <scope>SUBCELLULAR LOCATION</scope>
</reference>
<reference key="5">
    <citation type="journal article" date="1996" name="J. Virol.">
        <title>Overexpression of the vaccinia virus A38L integral membrane protein promotes Ca2+ influx into infected cells.</title>
        <authorList>
            <person name="Sanderson C.M."/>
            <person name="Parkinson J.E."/>
            <person name="Hollinshead M."/>
            <person name="Smith G.L."/>
        </authorList>
    </citation>
    <scope>FUNCTION</scope>
</reference>